<name>PDX12_ORYSJ</name>
<sequence>MASDGTDVVALYGGANGLSHKSGSFSVKVGLAQMLRGGVIMDVVTPEQARIAEEAGACAVMALERVPADIRAQGGVARMSDPGLIRDIKRSVTIPVMAKARIGHLVEAQILEAIGVDYVDESEVLTLADDAHHINKNNFRVPFVCGCRDLGEALRRIREGAAMIRTKGEAGTGNVVEAVRHVRSVMGDIRALRSMDDDEVFSYAKRIAAPYDLVMQTKQLGRLPVVQFAAGGVATPADAALMMQLGCDGVFVGSGIFKSGDPALRARAIVQAVTHYSDPKILAEVSSGLGEAMVGINLSDPKIHVERFAARSD</sequence>
<protein>
    <recommendedName>
        <fullName>Probable pyridoxal 5'-phosphate synthase subunit PDX1.2</fullName>
        <shortName>PLP synthase subunit PDX1.2</shortName>
        <ecNumber>4.3.3.6</ecNumber>
    </recommendedName>
</protein>
<gene>
    <name type="primary">PDX12</name>
    <name type="ordered locus">Os10g0100700</name>
    <name type="ordered locus">LOC_Os10g01080</name>
    <name type="ORF">OJ1136E01.11</name>
    <name type="ORF">OSJNBa0046L02.5</name>
</gene>
<proteinExistence type="evidence at transcript level"/>
<dbReference type="EC" id="4.3.3.6"/>
<dbReference type="EMBL" id="AC079632">
    <property type="protein sequence ID" value="AAL73561.1"/>
    <property type="molecule type" value="Genomic_DNA"/>
</dbReference>
<dbReference type="EMBL" id="AC108883">
    <property type="protein sequence ID" value="AAM08638.1"/>
    <property type="molecule type" value="Genomic_DNA"/>
</dbReference>
<dbReference type="EMBL" id="DP000086">
    <property type="protein sequence ID" value="AAP51743.1"/>
    <property type="molecule type" value="Genomic_DNA"/>
</dbReference>
<dbReference type="EMBL" id="AP008216">
    <property type="protein sequence ID" value="BAF25924.1"/>
    <property type="molecule type" value="Genomic_DNA"/>
</dbReference>
<dbReference type="EMBL" id="AP014966">
    <property type="protein sequence ID" value="BAT09558.1"/>
    <property type="molecule type" value="Genomic_DNA"/>
</dbReference>
<dbReference type="EMBL" id="AK060323">
    <property type="protein sequence ID" value="BAG87405.1"/>
    <property type="molecule type" value="mRNA"/>
</dbReference>
<dbReference type="RefSeq" id="XP_015613234.1">
    <property type="nucleotide sequence ID" value="XM_015757748.1"/>
</dbReference>
<dbReference type="SMR" id="Q8W3D0"/>
<dbReference type="FunCoup" id="Q8W3D0">
    <property type="interactions" value="625"/>
</dbReference>
<dbReference type="STRING" id="39947.Q8W3D0"/>
<dbReference type="PaxDb" id="39947-Q8W3D0"/>
<dbReference type="EnsemblPlants" id="Os10t0100700-01">
    <property type="protein sequence ID" value="Os10t0100700-01"/>
    <property type="gene ID" value="Os10g0100700"/>
</dbReference>
<dbReference type="Gramene" id="Os10t0100700-01">
    <property type="protein sequence ID" value="Os10t0100700-01"/>
    <property type="gene ID" value="Os10g0100700"/>
</dbReference>
<dbReference type="KEGG" id="dosa:Os10g0100700"/>
<dbReference type="eggNOG" id="KOG1606">
    <property type="taxonomic scope" value="Eukaryota"/>
</dbReference>
<dbReference type="HOGENOM" id="CLU_055352_1_0_1"/>
<dbReference type="InParanoid" id="Q8W3D0"/>
<dbReference type="OMA" id="MTERGTW"/>
<dbReference type="OrthoDB" id="1660966at2759"/>
<dbReference type="UniPathway" id="UPA00245"/>
<dbReference type="Proteomes" id="UP000000763">
    <property type="component" value="Chromosome 10"/>
</dbReference>
<dbReference type="Proteomes" id="UP000059680">
    <property type="component" value="Chromosome 10"/>
</dbReference>
<dbReference type="GO" id="GO:0016843">
    <property type="term" value="F:amine-lyase activity"/>
    <property type="evidence" value="ECO:0000318"/>
    <property type="project" value="GO_Central"/>
</dbReference>
<dbReference type="GO" id="GO:0036381">
    <property type="term" value="F:pyridoxal 5'-phosphate synthase (glutamine hydrolysing) activity"/>
    <property type="evidence" value="ECO:0007669"/>
    <property type="project" value="UniProtKB-EC"/>
</dbReference>
<dbReference type="GO" id="GO:0006520">
    <property type="term" value="P:amino acid metabolic process"/>
    <property type="evidence" value="ECO:0000318"/>
    <property type="project" value="GO_Central"/>
</dbReference>
<dbReference type="GO" id="GO:0042823">
    <property type="term" value="P:pyridoxal phosphate biosynthetic process"/>
    <property type="evidence" value="ECO:0000318"/>
    <property type="project" value="GO_Central"/>
</dbReference>
<dbReference type="GO" id="GO:0008615">
    <property type="term" value="P:pyridoxine biosynthetic process"/>
    <property type="evidence" value="ECO:0000318"/>
    <property type="project" value="GO_Central"/>
</dbReference>
<dbReference type="CDD" id="cd04727">
    <property type="entry name" value="pdxS"/>
    <property type="match status" value="1"/>
</dbReference>
<dbReference type="FunFam" id="3.20.20.70:FF:000001">
    <property type="entry name" value="Pyridoxine biosynthesis protein PDX1"/>
    <property type="match status" value="1"/>
</dbReference>
<dbReference type="Gene3D" id="3.20.20.70">
    <property type="entry name" value="Aldolase class I"/>
    <property type="match status" value="1"/>
</dbReference>
<dbReference type="HAMAP" id="MF_01824">
    <property type="entry name" value="PdxS"/>
    <property type="match status" value="1"/>
</dbReference>
<dbReference type="InterPro" id="IPR013785">
    <property type="entry name" value="Aldolase_TIM"/>
</dbReference>
<dbReference type="InterPro" id="IPR001852">
    <property type="entry name" value="PdxS/SNZ"/>
</dbReference>
<dbReference type="InterPro" id="IPR033755">
    <property type="entry name" value="PdxS/SNZ_N"/>
</dbReference>
<dbReference type="InterPro" id="IPR011060">
    <property type="entry name" value="RibuloseP-bd_barrel"/>
</dbReference>
<dbReference type="NCBIfam" id="NF003215">
    <property type="entry name" value="PRK04180.1"/>
    <property type="match status" value="1"/>
</dbReference>
<dbReference type="NCBIfam" id="TIGR00343">
    <property type="entry name" value="pyridoxal 5'-phosphate synthase lyase subunit PdxS"/>
    <property type="match status" value="1"/>
</dbReference>
<dbReference type="PANTHER" id="PTHR31829">
    <property type="entry name" value="PYRIDOXAL 5'-PHOSPHATE SYNTHASE SUBUNIT SNZ1-RELATED"/>
    <property type="match status" value="1"/>
</dbReference>
<dbReference type="PANTHER" id="PTHR31829:SF0">
    <property type="entry name" value="PYRIDOXAL 5'-PHOSPHATE SYNTHASE SUBUNIT SNZ1-RELATED"/>
    <property type="match status" value="1"/>
</dbReference>
<dbReference type="Pfam" id="PF01680">
    <property type="entry name" value="SOR_SNZ"/>
    <property type="match status" value="1"/>
</dbReference>
<dbReference type="PIRSF" id="PIRSF029271">
    <property type="entry name" value="Pdx1"/>
    <property type="match status" value="1"/>
</dbReference>
<dbReference type="SUPFAM" id="SSF51366">
    <property type="entry name" value="Ribulose-phoshate binding barrel"/>
    <property type="match status" value="1"/>
</dbReference>
<dbReference type="PROSITE" id="PS01235">
    <property type="entry name" value="PDXS_SNZ_1"/>
    <property type="match status" value="1"/>
</dbReference>
<dbReference type="PROSITE" id="PS51129">
    <property type="entry name" value="PDXS_SNZ_2"/>
    <property type="match status" value="1"/>
</dbReference>
<evidence type="ECO:0000250" key="1">
    <source>
        <dbReference type="UniProtKB" id="O59080"/>
    </source>
</evidence>
<evidence type="ECO:0000250" key="2">
    <source>
        <dbReference type="UniProtKB" id="O80448"/>
    </source>
</evidence>
<evidence type="ECO:0000250" key="3">
    <source>
        <dbReference type="UniProtKB" id="Q03148"/>
    </source>
</evidence>
<evidence type="ECO:0000305" key="4"/>
<comment type="function">
    <text evidence="2">Catalyzes the formation of pyridoxal 5'-phosphate from ribose 5-phosphate (RBP), glyceraldehyde 3-phosphate (G3P) and ammonia. The ammonia is provided by PDX2. Can also use ribulose 5-phosphate and dihydroxyacetone phosphate as substrates, resulting from enzyme-catalyzed isomerization of RBP and G3P, respectively. Also plays an indirect role in resistance to singlet oxygen-generating photosensitizers.</text>
</comment>
<comment type="catalytic activity">
    <reaction evidence="3">
        <text>aldehydo-D-ribose 5-phosphate + D-glyceraldehyde 3-phosphate + L-glutamine = pyridoxal 5'-phosphate + L-glutamate + phosphate + 3 H2O + H(+)</text>
        <dbReference type="Rhea" id="RHEA:31507"/>
        <dbReference type="ChEBI" id="CHEBI:15377"/>
        <dbReference type="ChEBI" id="CHEBI:15378"/>
        <dbReference type="ChEBI" id="CHEBI:29985"/>
        <dbReference type="ChEBI" id="CHEBI:43474"/>
        <dbReference type="ChEBI" id="CHEBI:58273"/>
        <dbReference type="ChEBI" id="CHEBI:58359"/>
        <dbReference type="ChEBI" id="CHEBI:59776"/>
        <dbReference type="ChEBI" id="CHEBI:597326"/>
        <dbReference type="EC" id="4.3.3.6"/>
    </reaction>
</comment>
<comment type="pathway">
    <text>Cofactor biosynthesis; pyridoxal 5'-phosphate biosynthesis.</text>
</comment>
<comment type="miscellaneous">
    <text>Vitamin B6 is an essential quencher of singlet oxygen in plants, that can protect cellular membranes from lipid peroxidation.</text>
</comment>
<comment type="similarity">
    <text evidence="4">Belongs to the PdxS/SNZ family.</text>
</comment>
<reference key="1">
    <citation type="journal article" date="2003" name="Science">
        <title>In-depth view of structure, activity, and evolution of rice chromosome 10.</title>
        <authorList>
            <person name="Yu Y."/>
            <person name="Rambo T."/>
            <person name="Currie J."/>
            <person name="Saski C."/>
            <person name="Kim H.-R."/>
            <person name="Collura K."/>
            <person name="Thompson S."/>
            <person name="Simmons J."/>
            <person name="Yang T.-J."/>
            <person name="Nah G."/>
            <person name="Patel A.J."/>
            <person name="Thurmond S."/>
            <person name="Henry D."/>
            <person name="Oates R."/>
            <person name="Palmer M."/>
            <person name="Pries G."/>
            <person name="Gibson J."/>
            <person name="Anderson H."/>
            <person name="Paradkar M."/>
            <person name="Crane L."/>
            <person name="Dale J."/>
            <person name="Carver M.B."/>
            <person name="Wood T."/>
            <person name="Frisch D."/>
            <person name="Engler F."/>
            <person name="Soderlund C."/>
            <person name="Palmer L.E."/>
            <person name="Teytelman L."/>
            <person name="Nascimento L."/>
            <person name="De la Bastide M."/>
            <person name="Spiegel L."/>
            <person name="Ware D."/>
            <person name="O'Shaughnessy A."/>
            <person name="Dike S."/>
            <person name="Dedhia N."/>
            <person name="Preston R."/>
            <person name="Huang E."/>
            <person name="Ferraro K."/>
            <person name="Kuit K."/>
            <person name="Miller B."/>
            <person name="Zutavern T."/>
            <person name="Katzenberger F."/>
            <person name="Muller S."/>
            <person name="Balija V."/>
            <person name="Martienssen R.A."/>
            <person name="Stein L."/>
            <person name="Minx P."/>
            <person name="Johnson D."/>
            <person name="Cordum H."/>
            <person name="Mardis E."/>
            <person name="Cheng Z."/>
            <person name="Jiang J."/>
            <person name="Wilson R."/>
            <person name="McCombie W.R."/>
            <person name="Wing R.A."/>
            <person name="Yuan Q."/>
            <person name="Ouyang S."/>
            <person name="Liu J."/>
            <person name="Jones K.M."/>
            <person name="Gansberger K."/>
            <person name="Moffat K."/>
            <person name="Hill J."/>
            <person name="Tsitrin T."/>
            <person name="Overton L."/>
            <person name="Bera J."/>
            <person name="Kim M."/>
            <person name="Jin S."/>
            <person name="Tallon L."/>
            <person name="Ciecko A."/>
            <person name="Pai G."/>
            <person name="Van Aken S."/>
            <person name="Utterback T."/>
            <person name="Reidmuller S."/>
            <person name="Bormann J."/>
            <person name="Feldblyum T."/>
            <person name="Hsiao J."/>
            <person name="Zismann V."/>
            <person name="Blunt S."/>
            <person name="de Vazeille A.R."/>
            <person name="Shaffer T."/>
            <person name="Koo H."/>
            <person name="Suh B."/>
            <person name="Yang Q."/>
            <person name="Haas B."/>
            <person name="Peterson J."/>
            <person name="Pertea M."/>
            <person name="Volfovsky N."/>
            <person name="Wortman J."/>
            <person name="White O."/>
            <person name="Salzberg S.L."/>
            <person name="Fraser C.M."/>
            <person name="Buell C.R."/>
            <person name="Messing J."/>
            <person name="Song R."/>
            <person name="Fuks G."/>
            <person name="Llaca V."/>
            <person name="Kovchak S."/>
            <person name="Young S."/>
            <person name="Bowers J.E."/>
            <person name="Paterson A.H."/>
            <person name="Johns M.A."/>
            <person name="Mao L."/>
            <person name="Pan H."/>
            <person name="Dean R.A."/>
        </authorList>
    </citation>
    <scope>NUCLEOTIDE SEQUENCE [LARGE SCALE GENOMIC DNA]</scope>
    <source>
        <strain>cv. Nipponbare</strain>
    </source>
</reference>
<reference key="2">
    <citation type="journal article" date="2005" name="Nature">
        <title>The map-based sequence of the rice genome.</title>
        <authorList>
            <consortium name="International rice genome sequencing project (IRGSP)"/>
        </authorList>
    </citation>
    <scope>NUCLEOTIDE SEQUENCE [LARGE SCALE GENOMIC DNA]</scope>
    <source>
        <strain>cv. Nipponbare</strain>
    </source>
</reference>
<reference key="3">
    <citation type="journal article" date="2008" name="Nucleic Acids Res.">
        <title>The rice annotation project database (RAP-DB): 2008 update.</title>
        <authorList>
            <consortium name="The rice annotation project (RAP)"/>
        </authorList>
    </citation>
    <scope>GENOME REANNOTATION</scope>
    <source>
        <strain>cv. Nipponbare</strain>
    </source>
</reference>
<reference key="4">
    <citation type="journal article" date="2013" name="Rice">
        <title>Improvement of the Oryza sativa Nipponbare reference genome using next generation sequence and optical map data.</title>
        <authorList>
            <person name="Kawahara Y."/>
            <person name="de la Bastide M."/>
            <person name="Hamilton J.P."/>
            <person name="Kanamori H."/>
            <person name="McCombie W.R."/>
            <person name="Ouyang S."/>
            <person name="Schwartz D.C."/>
            <person name="Tanaka T."/>
            <person name="Wu J."/>
            <person name="Zhou S."/>
            <person name="Childs K.L."/>
            <person name="Davidson R.M."/>
            <person name="Lin H."/>
            <person name="Quesada-Ocampo L."/>
            <person name="Vaillancourt B."/>
            <person name="Sakai H."/>
            <person name="Lee S.S."/>
            <person name="Kim J."/>
            <person name="Numa H."/>
            <person name="Itoh T."/>
            <person name="Buell C.R."/>
            <person name="Matsumoto T."/>
        </authorList>
    </citation>
    <scope>GENOME REANNOTATION</scope>
    <source>
        <strain>cv. Nipponbare</strain>
    </source>
</reference>
<reference key="5">
    <citation type="journal article" date="2003" name="Science">
        <title>Collection, mapping, and annotation of over 28,000 cDNA clones from japonica rice.</title>
        <authorList>
            <consortium name="The rice full-length cDNA consortium"/>
        </authorList>
    </citation>
    <scope>NUCLEOTIDE SEQUENCE [LARGE SCALE MRNA]</scope>
    <source>
        <strain>cv. Nipponbare</strain>
    </source>
</reference>
<accession>Q8W3D0</accession>
<accession>B7E4V8</accession>
<accession>Q7G6W0</accession>
<accession>Q7XHH7</accession>
<keyword id="KW-0456">Lyase</keyword>
<keyword id="KW-0663">Pyridoxal phosphate</keyword>
<keyword id="KW-1185">Reference proteome</keyword>
<keyword id="KW-0704">Schiff base</keyword>
<organism>
    <name type="scientific">Oryza sativa subsp. japonica</name>
    <name type="common">Rice</name>
    <dbReference type="NCBI Taxonomy" id="39947"/>
    <lineage>
        <taxon>Eukaryota</taxon>
        <taxon>Viridiplantae</taxon>
        <taxon>Streptophyta</taxon>
        <taxon>Embryophyta</taxon>
        <taxon>Tracheophyta</taxon>
        <taxon>Spermatophyta</taxon>
        <taxon>Magnoliopsida</taxon>
        <taxon>Liliopsida</taxon>
        <taxon>Poales</taxon>
        <taxon>Poaceae</taxon>
        <taxon>BOP clade</taxon>
        <taxon>Oryzoideae</taxon>
        <taxon>Oryzeae</taxon>
        <taxon>Oryzinae</taxon>
        <taxon>Oryza</taxon>
        <taxon>Oryza sativa</taxon>
    </lineage>
</organism>
<feature type="chain" id="PRO_0000270628" description="Probable pyridoxal 5'-phosphate synthase subunit PDX1.2">
    <location>
        <begin position="1"/>
        <end position="313"/>
    </location>
</feature>
<feature type="active site" description="Schiff-base intermediate with D-ribose 5-phosphate" evidence="1">
    <location>
        <position position="99"/>
    </location>
</feature>
<feature type="binding site" evidence="1">
    <location>
        <position position="42"/>
    </location>
    <ligand>
        <name>D-ribose 5-phosphate</name>
        <dbReference type="ChEBI" id="CHEBI:78346"/>
    </ligand>
</feature>
<feature type="binding site" evidence="1">
    <location>
        <position position="171"/>
    </location>
    <ligand>
        <name>D-ribose 5-phosphate</name>
        <dbReference type="ChEBI" id="CHEBI:78346"/>
    </ligand>
</feature>
<feature type="binding site" evidence="3">
    <location>
        <position position="183"/>
    </location>
    <ligand>
        <name>D-glyceraldehyde 3-phosphate</name>
        <dbReference type="ChEBI" id="CHEBI:59776"/>
    </ligand>
</feature>
<feature type="binding site" evidence="1">
    <location>
        <position position="232"/>
    </location>
    <ligand>
        <name>D-ribose 5-phosphate</name>
        <dbReference type="ChEBI" id="CHEBI:78346"/>
    </ligand>
</feature>
<feature type="binding site" evidence="1">
    <location>
        <begin position="253"/>
        <end position="254"/>
    </location>
    <ligand>
        <name>D-ribose 5-phosphate</name>
        <dbReference type="ChEBI" id="CHEBI:78346"/>
    </ligand>
</feature>